<dbReference type="EMBL" id="BA000031">
    <property type="protein sequence ID" value="BAC61105.1"/>
    <property type="molecule type" value="Genomic_DNA"/>
</dbReference>
<dbReference type="RefSeq" id="NP_799221.1">
    <property type="nucleotide sequence ID" value="NC_004603.1"/>
</dbReference>
<dbReference type="RefSeq" id="WP_005381491.1">
    <property type="nucleotide sequence ID" value="NC_004603.1"/>
</dbReference>
<dbReference type="SMR" id="Q87KY2"/>
<dbReference type="GeneID" id="75166341"/>
<dbReference type="KEGG" id="vpa:VP2842"/>
<dbReference type="PATRIC" id="fig|223926.6.peg.2734"/>
<dbReference type="eggNOG" id="COG3029">
    <property type="taxonomic scope" value="Bacteria"/>
</dbReference>
<dbReference type="HOGENOM" id="CLU_156492_0_0_6"/>
<dbReference type="Proteomes" id="UP000002493">
    <property type="component" value="Chromosome 1"/>
</dbReference>
<dbReference type="GO" id="GO:0045283">
    <property type="term" value="C:fumarate reductase complex"/>
    <property type="evidence" value="ECO:0007669"/>
    <property type="project" value="UniProtKB-UniRule"/>
</dbReference>
<dbReference type="GO" id="GO:0005886">
    <property type="term" value="C:plasma membrane"/>
    <property type="evidence" value="ECO:0007669"/>
    <property type="project" value="UniProtKB-SubCell"/>
</dbReference>
<dbReference type="GO" id="GO:0000104">
    <property type="term" value="F:succinate dehydrogenase activity"/>
    <property type="evidence" value="ECO:0007669"/>
    <property type="project" value="UniProtKB-UniRule"/>
</dbReference>
<dbReference type="CDD" id="cd00546">
    <property type="entry name" value="QFR_TypeD_subunitC"/>
    <property type="match status" value="1"/>
</dbReference>
<dbReference type="Gene3D" id="1.20.1300.10">
    <property type="entry name" value="Fumarate reductase/succinate dehydrogenase, transmembrane subunit"/>
    <property type="match status" value="1"/>
</dbReference>
<dbReference type="HAMAP" id="MF_00708">
    <property type="entry name" value="Fumarate_red_C"/>
    <property type="match status" value="1"/>
</dbReference>
<dbReference type="InterPro" id="IPR003510">
    <property type="entry name" value="Fumarate_red_C"/>
</dbReference>
<dbReference type="InterPro" id="IPR034804">
    <property type="entry name" value="SQR/QFR_C/D"/>
</dbReference>
<dbReference type="NCBIfam" id="NF003445">
    <property type="entry name" value="PRK04987.1"/>
    <property type="match status" value="1"/>
</dbReference>
<dbReference type="Pfam" id="PF02300">
    <property type="entry name" value="Fumarate_red_C"/>
    <property type="match status" value="1"/>
</dbReference>
<dbReference type="PIRSF" id="PIRSF000180">
    <property type="entry name" value="FrdC"/>
    <property type="match status" value="1"/>
</dbReference>
<dbReference type="SUPFAM" id="SSF81343">
    <property type="entry name" value="Fumarate reductase respiratory complex transmembrane subunits"/>
    <property type="match status" value="1"/>
</dbReference>
<evidence type="ECO:0000255" key="1">
    <source>
        <dbReference type="HAMAP-Rule" id="MF_00708"/>
    </source>
</evidence>
<name>FRDC_VIBPA</name>
<keyword id="KW-0997">Cell inner membrane</keyword>
<keyword id="KW-1003">Cell membrane</keyword>
<keyword id="KW-0472">Membrane</keyword>
<keyword id="KW-0812">Transmembrane</keyword>
<keyword id="KW-1133">Transmembrane helix</keyword>
<proteinExistence type="inferred from homology"/>
<organism>
    <name type="scientific">Vibrio parahaemolyticus serotype O3:K6 (strain RIMD 2210633)</name>
    <dbReference type="NCBI Taxonomy" id="223926"/>
    <lineage>
        <taxon>Bacteria</taxon>
        <taxon>Pseudomonadati</taxon>
        <taxon>Pseudomonadota</taxon>
        <taxon>Gammaproteobacteria</taxon>
        <taxon>Vibrionales</taxon>
        <taxon>Vibrionaceae</taxon>
        <taxon>Vibrio</taxon>
    </lineage>
</organism>
<protein>
    <recommendedName>
        <fullName evidence="1">Fumarate reductase subunit C</fullName>
    </recommendedName>
    <alternativeName>
        <fullName evidence="1">Quinol-fumarate reductase subunit C</fullName>
        <shortName evidence="1">QFR subunit C</shortName>
    </alternativeName>
</protein>
<comment type="function">
    <text evidence="1">Anchors the catalytic components of the fumarate reductase complex to the cell membrane, binds quinones.</text>
</comment>
<comment type="subunit">
    <text evidence="1">Part of an enzyme complex containing four subunits: a flavoprotein (FrdA), an iron-sulfur protein (FrdB), and two hydrophobic anchor proteins (FrdC and FrdD).</text>
</comment>
<comment type="subcellular location">
    <subcellularLocation>
        <location evidence="1">Cell inner membrane</location>
        <topology evidence="1">Multi-pass membrane protein</topology>
    </subcellularLocation>
</comment>
<comment type="similarity">
    <text evidence="1">Belongs to the FrdC family.</text>
</comment>
<gene>
    <name evidence="1" type="primary">frdC</name>
    <name type="ordered locus">VP2842</name>
</gene>
<feature type="chain" id="PRO_0000196538" description="Fumarate reductase subunit C">
    <location>
        <begin position="1"/>
        <end position="127"/>
    </location>
</feature>
<feature type="transmembrane region" description="Helical" evidence="1">
    <location>
        <begin position="30"/>
        <end position="50"/>
    </location>
</feature>
<feature type="transmembrane region" description="Helical" evidence="1">
    <location>
        <begin position="58"/>
        <end position="78"/>
    </location>
</feature>
<feature type="transmembrane region" description="Helical" evidence="1">
    <location>
        <begin position="107"/>
        <end position="127"/>
    </location>
</feature>
<sequence>MSNRKPYVREVKRTWWKNHPFYRFYMLREATVLPLILFTLFLTFGLGCLVKGPEAWQGWLAFMANPIVVAINIVALLGSLFHAQTFFSMMPQVMPIRLKGKPVDKKIIVLTQWAAVAFISLIVLIVV</sequence>
<reference key="1">
    <citation type="journal article" date="2003" name="Lancet">
        <title>Genome sequence of Vibrio parahaemolyticus: a pathogenic mechanism distinct from that of V. cholerae.</title>
        <authorList>
            <person name="Makino K."/>
            <person name="Oshima K."/>
            <person name="Kurokawa K."/>
            <person name="Yokoyama K."/>
            <person name="Uda T."/>
            <person name="Tagomori K."/>
            <person name="Iijima Y."/>
            <person name="Najima M."/>
            <person name="Nakano M."/>
            <person name="Yamashita A."/>
            <person name="Kubota Y."/>
            <person name="Kimura S."/>
            <person name="Yasunaga T."/>
            <person name="Honda T."/>
            <person name="Shinagawa H."/>
            <person name="Hattori M."/>
            <person name="Iida T."/>
        </authorList>
    </citation>
    <scope>NUCLEOTIDE SEQUENCE [LARGE SCALE GENOMIC DNA]</scope>
    <source>
        <strain>RIMD 2210633</strain>
    </source>
</reference>
<accession>Q87KY2</accession>